<dbReference type="EMBL" id="AK057223">
    <property type="protein sequence ID" value="BAB71386.1"/>
    <property type="molecule type" value="mRNA"/>
</dbReference>
<dbReference type="EMBL" id="AC226150">
    <property type="status" value="NOT_ANNOTATED_CDS"/>
    <property type="molecule type" value="Genomic_DNA"/>
</dbReference>
<dbReference type="CCDS" id="CCDS53855.1"/>
<dbReference type="RefSeq" id="NP_001177983.1">
    <property type="nucleotide sequence ID" value="NM_001191054.1"/>
</dbReference>
<dbReference type="SMR" id="E9PGG2"/>
<dbReference type="FunCoup" id="E9PGG2">
    <property type="interactions" value="14"/>
</dbReference>
<dbReference type="STRING" id="9606.ENSP00000409950"/>
<dbReference type="iPTMnet" id="E9PGG2"/>
<dbReference type="PhosphoSitePlus" id="E9PGG2"/>
<dbReference type="BioMuta" id="ANHX"/>
<dbReference type="MassIVE" id="E9PGG2"/>
<dbReference type="PaxDb" id="9606-ENSP00000439513"/>
<dbReference type="PeptideAtlas" id="E9PGG2"/>
<dbReference type="ProteomicsDB" id="20316"/>
<dbReference type="Antibodypedia" id="56831">
    <property type="antibodies" value="23 antibodies from 7 providers"/>
</dbReference>
<dbReference type="DNASU" id="647589"/>
<dbReference type="Ensembl" id="ENST00000419717.3">
    <property type="protein sequence ID" value="ENSP00000409950.1"/>
    <property type="gene ID" value="ENSG00000227059.7"/>
</dbReference>
<dbReference type="GeneID" id="647589"/>
<dbReference type="KEGG" id="hsa:647589"/>
<dbReference type="UCSC" id="uc010tci.2">
    <property type="organism name" value="human"/>
</dbReference>
<dbReference type="AGR" id="HGNC:40024"/>
<dbReference type="CTD" id="647589"/>
<dbReference type="DisGeNET" id="647589"/>
<dbReference type="GeneCards" id="ANHX"/>
<dbReference type="HGNC" id="HGNC:40024">
    <property type="gene designation" value="ANHX"/>
</dbReference>
<dbReference type="HPA" id="ENSG00000227059">
    <property type="expression patterns" value="Tissue enriched (testis)"/>
</dbReference>
<dbReference type="neXtProt" id="NX_E9PGG2"/>
<dbReference type="OpenTargets" id="ENSG00000227059"/>
<dbReference type="VEuPathDB" id="HostDB:ENSG00000227059"/>
<dbReference type="eggNOG" id="KOG0775">
    <property type="taxonomic scope" value="Eukaryota"/>
</dbReference>
<dbReference type="GeneTree" id="ENSGT00390000013263"/>
<dbReference type="HOGENOM" id="CLU_041997_1_0_1"/>
<dbReference type="InParanoid" id="E9PGG2"/>
<dbReference type="OrthoDB" id="3501850at2759"/>
<dbReference type="PAN-GO" id="E9PGG2">
    <property type="GO annotations" value="6 GO annotations based on evolutionary models"/>
</dbReference>
<dbReference type="PhylomeDB" id="E9PGG2"/>
<dbReference type="BioGRID-ORCS" id="647589">
    <property type="hits" value="14 hits in 763 CRISPR screens"/>
</dbReference>
<dbReference type="GenomeRNAi" id="647589"/>
<dbReference type="Pharos" id="E9PGG2">
    <property type="development level" value="Tdark"/>
</dbReference>
<dbReference type="PRO" id="PR:E9PGG2"/>
<dbReference type="Proteomes" id="UP000005640">
    <property type="component" value="Chromosome 12"/>
</dbReference>
<dbReference type="RNAct" id="E9PGG2">
    <property type="molecule type" value="protein"/>
</dbReference>
<dbReference type="Bgee" id="ENSG00000227059">
    <property type="expression patterns" value="Expressed in primordial germ cell in gonad and 43 other cell types or tissues"/>
</dbReference>
<dbReference type="ExpressionAtlas" id="E9PGG2">
    <property type="expression patterns" value="baseline and differential"/>
</dbReference>
<dbReference type="GO" id="GO:0005634">
    <property type="term" value="C:nucleus"/>
    <property type="evidence" value="ECO:0000318"/>
    <property type="project" value="GO_Central"/>
</dbReference>
<dbReference type="GO" id="GO:0005667">
    <property type="term" value="C:transcription regulator complex"/>
    <property type="evidence" value="ECO:0000318"/>
    <property type="project" value="GO_Central"/>
</dbReference>
<dbReference type="GO" id="GO:0000981">
    <property type="term" value="F:DNA-binding transcription factor activity, RNA polymerase II-specific"/>
    <property type="evidence" value="ECO:0000318"/>
    <property type="project" value="GO_Central"/>
</dbReference>
<dbReference type="GO" id="GO:0000978">
    <property type="term" value="F:RNA polymerase II cis-regulatory region sequence-specific DNA binding"/>
    <property type="evidence" value="ECO:0000318"/>
    <property type="project" value="GO_Central"/>
</dbReference>
<dbReference type="GO" id="GO:0014857">
    <property type="term" value="P:regulation of skeletal muscle cell proliferation"/>
    <property type="evidence" value="ECO:0000318"/>
    <property type="project" value="GO_Central"/>
</dbReference>
<dbReference type="GO" id="GO:0006357">
    <property type="term" value="P:regulation of transcription by RNA polymerase II"/>
    <property type="evidence" value="ECO:0000318"/>
    <property type="project" value="GO_Central"/>
</dbReference>
<dbReference type="GO" id="GO:0048741">
    <property type="term" value="P:skeletal muscle fiber development"/>
    <property type="evidence" value="ECO:0000318"/>
    <property type="project" value="GO_Central"/>
</dbReference>
<dbReference type="CDD" id="cd00086">
    <property type="entry name" value="homeodomain"/>
    <property type="match status" value="1"/>
</dbReference>
<dbReference type="FunFam" id="1.10.10.60:FF:000412">
    <property type="entry name" value="Anomalous homeobox"/>
    <property type="match status" value="1"/>
</dbReference>
<dbReference type="Gene3D" id="1.10.10.60">
    <property type="entry name" value="Homeodomain-like"/>
    <property type="match status" value="1"/>
</dbReference>
<dbReference type="InterPro" id="IPR001356">
    <property type="entry name" value="HD"/>
</dbReference>
<dbReference type="InterPro" id="IPR017970">
    <property type="entry name" value="Homeobox_CS"/>
</dbReference>
<dbReference type="InterPro" id="IPR009057">
    <property type="entry name" value="Homeodomain-like_sf"/>
</dbReference>
<dbReference type="InterPro" id="IPR008422">
    <property type="entry name" value="KN_HD"/>
</dbReference>
<dbReference type="InterPro" id="IPR031701">
    <property type="entry name" value="SIX1_SD"/>
</dbReference>
<dbReference type="PANTHER" id="PTHR10390:SF34">
    <property type="entry name" value="ANOMALOUS HOMEOBOX PROTEIN"/>
    <property type="match status" value="1"/>
</dbReference>
<dbReference type="PANTHER" id="PTHR10390">
    <property type="entry name" value="HOMEOBOX PROTEIN SIX"/>
    <property type="match status" value="1"/>
</dbReference>
<dbReference type="Pfam" id="PF05920">
    <property type="entry name" value="Homeobox_KN"/>
    <property type="match status" value="1"/>
</dbReference>
<dbReference type="Pfam" id="PF16878">
    <property type="entry name" value="SIX1_SD"/>
    <property type="match status" value="1"/>
</dbReference>
<dbReference type="SMART" id="SM00389">
    <property type="entry name" value="HOX"/>
    <property type="match status" value="1"/>
</dbReference>
<dbReference type="SUPFAM" id="SSF46689">
    <property type="entry name" value="Homeodomain-like"/>
    <property type="match status" value="1"/>
</dbReference>
<dbReference type="PROSITE" id="PS00027">
    <property type="entry name" value="HOMEOBOX_1"/>
    <property type="match status" value="1"/>
</dbReference>
<dbReference type="PROSITE" id="PS50071">
    <property type="entry name" value="HOMEOBOX_2"/>
    <property type="match status" value="1"/>
</dbReference>
<gene>
    <name type="primary">ANHX</name>
</gene>
<name>ANHX_HUMAN</name>
<keyword id="KW-0238">DNA-binding</keyword>
<keyword id="KW-0371">Homeobox</keyword>
<keyword id="KW-0539">Nucleus</keyword>
<keyword id="KW-1267">Proteomics identification</keyword>
<keyword id="KW-1185">Reference proteome</keyword>
<sequence>MQSFLTLLKEHEDTCAPPAELVTLAGRLCRDFQDDLAQLQPLVTAILDSQLRLHLLDNADVALACARVLDQQEQQQAACRLLEGCQVPGGSQELVQLWNDIHYRLVMRRLGVAALTPVQKFRCRKRNPPPPSLCPEGLKSRNFPREVREKLHNFAVGVNTNPSKAERENLALETSLTPEQVYNWFANYRRRQRALPQHMKPAQQATAEDPGARERGPDLLQPSGNPRVDSGFVDRPQWSEEREEKGPPQSPQTTQGPWEPLALAPDFPADETVSKPLDVSGHPQSVQLEEGLGTSSGRTELRVGSFLVTQPPLQAPEFILTQSPPELAPAPSAFPGPVSAMELSQALPSSQVQCSDSQASGDAFWGARMLLEFSGSSLG</sequence>
<protein>
    <recommendedName>
        <fullName>Anomalous homeobox protein</fullName>
    </recommendedName>
</protein>
<organism>
    <name type="scientific">Homo sapiens</name>
    <name type="common">Human</name>
    <dbReference type="NCBI Taxonomy" id="9606"/>
    <lineage>
        <taxon>Eukaryota</taxon>
        <taxon>Metazoa</taxon>
        <taxon>Chordata</taxon>
        <taxon>Craniata</taxon>
        <taxon>Vertebrata</taxon>
        <taxon>Euteleostomi</taxon>
        <taxon>Mammalia</taxon>
        <taxon>Eutheria</taxon>
        <taxon>Euarchontoglires</taxon>
        <taxon>Primates</taxon>
        <taxon>Haplorrhini</taxon>
        <taxon>Catarrhini</taxon>
        <taxon>Hominidae</taxon>
        <taxon>Homo</taxon>
    </lineage>
</organism>
<evidence type="ECO:0000255" key="1">
    <source>
        <dbReference type="PROSITE-ProRule" id="PRU00108"/>
    </source>
</evidence>
<evidence type="ECO:0000256" key="2">
    <source>
        <dbReference type="SAM" id="MobiDB-lite"/>
    </source>
</evidence>
<evidence type="ECO:0000305" key="3"/>
<comment type="subcellular location">
    <subcellularLocation>
        <location evidence="1">Nucleus</location>
    </subcellularLocation>
</comment>
<proteinExistence type="evidence at protein level"/>
<reference key="1">
    <citation type="journal article" date="2004" name="Nat. Genet.">
        <title>Complete sequencing and characterization of 21,243 full-length human cDNAs.</title>
        <authorList>
            <person name="Ota T."/>
            <person name="Suzuki Y."/>
            <person name="Nishikawa T."/>
            <person name="Otsuki T."/>
            <person name="Sugiyama T."/>
            <person name="Irie R."/>
            <person name="Wakamatsu A."/>
            <person name="Hayashi K."/>
            <person name="Sato H."/>
            <person name="Nagai K."/>
            <person name="Kimura K."/>
            <person name="Makita H."/>
            <person name="Sekine M."/>
            <person name="Obayashi M."/>
            <person name="Nishi T."/>
            <person name="Shibahara T."/>
            <person name="Tanaka T."/>
            <person name="Ishii S."/>
            <person name="Yamamoto J."/>
            <person name="Saito K."/>
            <person name="Kawai Y."/>
            <person name="Isono Y."/>
            <person name="Nakamura Y."/>
            <person name="Nagahari K."/>
            <person name="Murakami K."/>
            <person name="Yasuda T."/>
            <person name="Iwayanagi T."/>
            <person name="Wagatsuma M."/>
            <person name="Shiratori A."/>
            <person name="Sudo H."/>
            <person name="Hosoiri T."/>
            <person name="Kaku Y."/>
            <person name="Kodaira H."/>
            <person name="Kondo H."/>
            <person name="Sugawara M."/>
            <person name="Takahashi M."/>
            <person name="Kanda K."/>
            <person name="Yokoi T."/>
            <person name="Furuya T."/>
            <person name="Kikkawa E."/>
            <person name="Omura Y."/>
            <person name="Abe K."/>
            <person name="Kamihara K."/>
            <person name="Katsuta N."/>
            <person name="Sato K."/>
            <person name="Tanikawa M."/>
            <person name="Yamazaki M."/>
            <person name="Ninomiya K."/>
            <person name="Ishibashi T."/>
            <person name="Yamashita H."/>
            <person name="Murakawa K."/>
            <person name="Fujimori K."/>
            <person name="Tanai H."/>
            <person name="Kimata M."/>
            <person name="Watanabe M."/>
            <person name="Hiraoka S."/>
            <person name="Chiba Y."/>
            <person name="Ishida S."/>
            <person name="Ono Y."/>
            <person name="Takiguchi S."/>
            <person name="Watanabe S."/>
            <person name="Yosida M."/>
            <person name="Hotuta T."/>
            <person name="Kusano J."/>
            <person name="Kanehori K."/>
            <person name="Takahashi-Fujii A."/>
            <person name="Hara H."/>
            <person name="Tanase T.-O."/>
            <person name="Nomura Y."/>
            <person name="Togiya S."/>
            <person name="Komai F."/>
            <person name="Hara R."/>
            <person name="Takeuchi K."/>
            <person name="Arita M."/>
            <person name="Imose N."/>
            <person name="Musashino K."/>
            <person name="Yuuki H."/>
            <person name="Oshima A."/>
            <person name="Sasaki N."/>
            <person name="Aotsuka S."/>
            <person name="Yoshikawa Y."/>
            <person name="Matsunawa H."/>
            <person name="Ichihara T."/>
            <person name="Shiohata N."/>
            <person name="Sano S."/>
            <person name="Moriya S."/>
            <person name="Momiyama H."/>
            <person name="Satoh N."/>
            <person name="Takami S."/>
            <person name="Terashima Y."/>
            <person name="Suzuki O."/>
            <person name="Nakagawa S."/>
            <person name="Senoh A."/>
            <person name="Mizoguchi H."/>
            <person name="Goto Y."/>
            <person name="Shimizu F."/>
            <person name="Wakebe H."/>
            <person name="Hishigaki H."/>
            <person name="Watanabe T."/>
            <person name="Sugiyama A."/>
            <person name="Takemoto M."/>
            <person name="Kawakami B."/>
            <person name="Yamazaki M."/>
            <person name="Watanabe K."/>
            <person name="Kumagai A."/>
            <person name="Itakura S."/>
            <person name="Fukuzumi Y."/>
            <person name="Fujimori Y."/>
            <person name="Komiyama M."/>
            <person name="Tashiro H."/>
            <person name="Tanigami A."/>
            <person name="Fujiwara T."/>
            <person name="Ono T."/>
            <person name="Yamada K."/>
            <person name="Fujii Y."/>
            <person name="Ozaki K."/>
            <person name="Hirao M."/>
            <person name="Ohmori Y."/>
            <person name="Kawabata A."/>
            <person name="Hikiji T."/>
            <person name="Kobatake N."/>
            <person name="Inagaki H."/>
            <person name="Ikema Y."/>
            <person name="Okamoto S."/>
            <person name="Okitani R."/>
            <person name="Kawakami T."/>
            <person name="Noguchi S."/>
            <person name="Itoh T."/>
            <person name="Shigeta K."/>
            <person name="Senba T."/>
            <person name="Matsumura K."/>
            <person name="Nakajima Y."/>
            <person name="Mizuno T."/>
            <person name="Morinaga M."/>
            <person name="Sasaki M."/>
            <person name="Togashi T."/>
            <person name="Oyama M."/>
            <person name="Hata H."/>
            <person name="Watanabe M."/>
            <person name="Komatsu T."/>
            <person name="Mizushima-Sugano J."/>
            <person name="Satoh T."/>
            <person name="Shirai Y."/>
            <person name="Takahashi Y."/>
            <person name="Nakagawa K."/>
            <person name="Okumura K."/>
            <person name="Nagase T."/>
            <person name="Nomura N."/>
            <person name="Kikuchi H."/>
            <person name="Masuho Y."/>
            <person name="Yamashita R."/>
            <person name="Nakai K."/>
            <person name="Yada T."/>
            <person name="Nakamura Y."/>
            <person name="Ohara O."/>
            <person name="Isogai T."/>
            <person name="Sugano S."/>
        </authorList>
    </citation>
    <scope>NUCLEOTIDE SEQUENCE [LARGE SCALE MRNA]</scope>
    <source>
        <tissue>Testis</tissue>
    </source>
</reference>
<reference key="2">
    <citation type="journal article" date="2006" name="Nature">
        <title>The finished DNA sequence of human chromosome 12.</title>
        <authorList>
            <person name="Scherer S.E."/>
            <person name="Muzny D.M."/>
            <person name="Buhay C.J."/>
            <person name="Chen R."/>
            <person name="Cree A."/>
            <person name="Ding Y."/>
            <person name="Dugan-Rocha S."/>
            <person name="Gill R."/>
            <person name="Gunaratne P."/>
            <person name="Harris R.A."/>
            <person name="Hawes A.C."/>
            <person name="Hernandez J."/>
            <person name="Hodgson A.V."/>
            <person name="Hume J."/>
            <person name="Jackson A."/>
            <person name="Khan Z.M."/>
            <person name="Kovar-Smith C."/>
            <person name="Lewis L.R."/>
            <person name="Lozado R.J."/>
            <person name="Metzker M.L."/>
            <person name="Milosavljevic A."/>
            <person name="Miner G.R."/>
            <person name="Montgomery K.T."/>
            <person name="Morgan M.B."/>
            <person name="Nazareth L.V."/>
            <person name="Scott G."/>
            <person name="Sodergren E."/>
            <person name="Song X.-Z."/>
            <person name="Steffen D."/>
            <person name="Lovering R.C."/>
            <person name="Wheeler D.A."/>
            <person name="Worley K.C."/>
            <person name="Yuan Y."/>
            <person name="Zhang Z."/>
            <person name="Adams C.Q."/>
            <person name="Ansari-Lari M.A."/>
            <person name="Ayele M."/>
            <person name="Brown M.J."/>
            <person name="Chen G."/>
            <person name="Chen Z."/>
            <person name="Clerc-Blankenburg K.P."/>
            <person name="Davis C."/>
            <person name="Delgado O."/>
            <person name="Dinh H.H."/>
            <person name="Draper H."/>
            <person name="Gonzalez-Garay M.L."/>
            <person name="Havlak P."/>
            <person name="Jackson L.R."/>
            <person name="Jacob L.S."/>
            <person name="Kelly S.H."/>
            <person name="Li L."/>
            <person name="Li Z."/>
            <person name="Liu J."/>
            <person name="Liu W."/>
            <person name="Lu J."/>
            <person name="Maheshwari M."/>
            <person name="Nguyen B.-V."/>
            <person name="Okwuonu G.O."/>
            <person name="Pasternak S."/>
            <person name="Perez L.M."/>
            <person name="Plopper F.J.H."/>
            <person name="Santibanez J."/>
            <person name="Shen H."/>
            <person name="Tabor P.E."/>
            <person name="Verduzco D."/>
            <person name="Waldron L."/>
            <person name="Wang Q."/>
            <person name="Williams G.A."/>
            <person name="Zhang J."/>
            <person name="Zhou J."/>
            <person name="Allen C.C."/>
            <person name="Amin A.G."/>
            <person name="Anyalebechi V."/>
            <person name="Bailey M."/>
            <person name="Barbaria J.A."/>
            <person name="Bimage K.E."/>
            <person name="Bryant N.P."/>
            <person name="Burch P.E."/>
            <person name="Burkett C.E."/>
            <person name="Burrell K.L."/>
            <person name="Calderon E."/>
            <person name="Cardenas V."/>
            <person name="Carter K."/>
            <person name="Casias K."/>
            <person name="Cavazos I."/>
            <person name="Cavazos S.R."/>
            <person name="Ceasar H."/>
            <person name="Chacko J."/>
            <person name="Chan S.N."/>
            <person name="Chavez D."/>
            <person name="Christopoulos C."/>
            <person name="Chu J."/>
            <person name="Cockrell R."/>
            <person name="Cox C.D."/>
            <person name="Dang M."/>
            <person name="Dathorne S.R."/>
            <person name="David R."/>
            <person name="Davis C.M."/>
            <person name="Davy-Carroll L."/>
            <person name="Deshazo D.R."/>
            <person name="Donlin J.E."/>
            <person name="D'Souza L."/>
            <person name="Eaves K.A."/>
            <person name="Egan A."/>
            <person name="Emery-Cohen A.J."/>
            <person name="Escotto M."/>
            <person name="Flagg N."/>
            <person name="Forbes L.D."/>
            <person name="Gabisi A.M."/>
            <person name="Garza M."/>
            <person name="Hamilton C."/>
            <person name="Henderson N."/>
            <person name="Hernandez O."/>
            <person name="Hines S."/>
            <person name="Hogues M.E."/>
            <person name="Huang M."/>
            <person name="Idlebird D.G."/>
            <person name="Johnson R."/>
            <person name="Jolivet A."/>
            <person name="Jones S."/>
            <person name="Kagan R."/>
            <person name="King L.M."/>
            <person name="Leal B."/>
            <person name="Lebow H."/>
            <person name="Lee S."/>
            <person name="LeVan J.M."/>
            <person name="Lewis L.C."/>
            <person name="London P."/>
            <person name="Lorensuhewa L.M."/>
            <person name="Loulseged H."/>
            <person name="Lovett D.A."/>
            <person name="Lucier A."/>
            <person name="Lucier R.L."/>
            <person name="Ma J."/>
            <person name="Madu R.C."/>
            <person name="Mapua P."/>
            <person name="Martindale A.D."/>
            <person name="Martinez E."/>
            <person name="Massey E."/>
            <person name="Mawhiney S."/>
            <person name="Meador M.G."/>
            <person name="Mendez S."/>
            <person name="Mercado C."/>
            <person name="Mercado I.C."/>
            <person name="Merritt C.E."/>
            <person name="Miner Z.L."/>
            <person name="Minja E."/>
            <person name="Mitchell T."/>
            <person name="Mohabbat F."/>
            <person name="Mohabbat K."/>
            <person name="Montgomery B."/>
            <person name="Moore N."/>
            <person name="Morris S."/>
            <person name="Munidasa M."/>
            <person name="Ngo R.N."/>
            <person name="Nguyen N.B."/>
            <person name="Nickerson E."/>
            <person name="Nwaokelemeh O.O."/>
            <person name="Nwokenkwo S."/>
            <person name="Obregon M."/>
            <person name="Oguh M."/>
            <person name="Oragunye N."/>
            <person name="Oviedo R.J."/>
            <person name="Parish B.J."/>
            <person name="Parker D.N."/>
            <person name="Parrish J."/>
            <person name="Parks K.L."/>
            <person name="Paul H.A."/>
            <person name="Payton B.A."/>
            <person name="Perez A."/>
            <person name="Perrin W."/>
            <person name="Pickens A."/>
            <person name="Primus E.L."/>
            <person name="Pu L.-L."/>
            <person name="Puazo M."/>
            <person name="Quiles M.M."/>
            <person name="Quiroz J.B."/>
            <person name="Rabata D."/>
            <person name="Reeves K."/>
            <person name="Ruiz S.J."/>
            <person name="Shao H."/>
            <person name="Sisson I."/>
            <person name="Sonaike T."/>
            <person name="Sorelle R.P."/>
            <person name="Sutton A.E."/>
            <person name="Svatek A.F."/>
            <person name="Svetz L.A."/>
            <person name="Tamerisa K.S."/>
            <person name="Taylor T.R."/>
            <person name="Teague B."/>
            <person name="Thomas N."/>
            <person name="Thorn R.D."/>
            <person name="Trejos Z.Y."/>
            <person name="Trevino B.K."/>
            <person name="Ukegbu O.N."/>
            <person name="Urban J.B."/>
            <person name="Vasquez L.I."/>
            <person name="Vera V.A."/>
            <person name="Villasana D.M."/>
            <person name="Wang L."/>
            <person name="Ward-Moore S."/>
            <person name="Warren J.T."/>
            <person name="Wei X."/>
            <person name="White F."/>
            <person name="Williamson A.L."/>
            <person name="Wleczyk R."/>
            <person name="Wooden H.S."/>
            <person name="Wooden S.H."/>
            <person name="Yen J."/>
            <person name="Yoon L."/>
            <person name="Yoon V."/>
            <person name="Zorrilla S.E."/>
            <person name="Nelson D."/>
            <person name="Kucherlapati R."/>
            <person name="Weinstock G."/>
            <person name="Gibbs R.A."/>
        </authorList>
    </citation>
    <scope>NUCLEOTIDE SEQUENCE [LARGE SCALE GENOMIC DNA]</scope>
</reference>
<feature type="chain" id="PRO_0000418211" description="Anomalous homeobox protein">
    <location>
        <begin position="1"/>
        <end position="379"/>
    </location>
</feature>
<feature type="DNA-binding region" description="Homeobox" evidence="1">
    <location>
        <begin position="135"/>
        <end position="196"/>
    </location>
</feature>
<feature type="region of interest" description="Disordered" evidence="2">
    <location>
        <begin position="195"/>
        <end position="283"/>
    </location>
</feature>
<feature type="compositionally biased region" description="Basic and acidic residues" evidence="2">
    <location>
        <begin position="237"/>
        <end position="246"/>
    </location>
</feature>
<feature type="sequence conflict" description="In Ref. 1; BAB71386." evidence="3" ref="1">
    <original>T</original>
    <variation>A</variation>
    <location>
        <position position="23"/>
    </location>
</feature>
<feature type="sequence conflict" description="In Ref. 1; BAB71386." evidence="3" ref="1">
    <original>T</original>
    <variation>S</variation>
    <location>
        <position position="272"/>
    </location>
</feature>
<feature type="sequence conflict" description="In Ref. 1; BAB71386." evidence="3" ref="1">
    <original>A</original>
    <variation>V</variation>
    <location>
        <position position="346"/>
    </location>
</feature>
<accession>E9PGG2</accession>
<accession>Q96MC1</accession>